<keyword id="KW-0249">Electron transport</keyword>
<keyword id="KW-0349">Heme</keyword>
<keyword id="KW-0408">Iron</keyword>
<keyword id="KW-0472">Membrane</keyword>
<keyword id="KW-0479">Metal-binding</keyword>
<keyword id="KW-0496">Mitochondrion</keyword>
<keyword id="KW-0999">Mitochondrion inner membrane</keyword>
<keyword id="KW-0679">Respiratory chain</keyword>
<keyword id="KW-0812">Transmembrane</keyword>
<keyword id="KW-1133">Transmembrane helix</keyword>
<keyword id="KW-0813">Transport</keyword>
<keyword id="KW-0830">Ubiquinone</keyword>
<comment type="function">
    <text evidence="2">Component of the ubiquinol-cytochrome c reductase complex (complex III or cytochrome b-c1 complex) that is part of the mitochondrial respiratory chain. The b-c1 complex mediates electron transfer from ubiquinol to cytochrome c. Contributes to the generation of a proton gradient across the mitochondrial membrane that is then used for ATP synthesis.</text>
</comment>
<comment type="cofactor">
    <cofactor evidence="2">
        <name>heme b</name>
        <dbReference type="ChEBI" id="CHEBI:60344"/>
    </cofactor>
    <text evidence="2">Binds 2 heme b groups non-covalently.</text>
</comment>
<comment type="subunit">
    <text evidence="2">The cytochrome bc1 complex contains 11 subunits: 3 respiratory subunits (MT-CYB, CYC1 and UQCRFS1), 2 core proteins (UQCRC1 and UQCRC2) and 6 low-molecular weight proteins (UQCRH/QCR6, UQCRB/QCR7, UQCRQ/QCR8, UQCR10/QCR9, UQCR11/QCR10 and a cleavage product of UQCRFS1). This cytochrome bc1 complex then forms a dimer.</text>
</comment>
<comment type="subcellular location">
    <subcellularLocation>
        <location evidence="2">Mitochondrion inner membrane</location>
        <topology evidence="2">Multi-pass membrane protein</topology>
    </subcellularLocation>
</comment>
<comment type="miscellaneous">
    <text evidence="1">Heme 1 (or BL or b562) is low-potential and absorbs at about 562 nm, and heme 2 (or BH or b566) is high-potential and absorbs at about 566 nm.</text>
</comment>
<comment type="similarity">
    <text evidence="3 4">Belongs to the cytochrome b family.</text>
</comment>
<comment type="caution">
    <text evidence="2">The full-length protein contains only eight transmembrane helices, not nine as predicted by bioinformatics tools.</text>
</comment>
<name>CYB_DIDAL</name>
<evidence type="ECO:0000250" key="1"/>
<evidence type="ECO:0000250" key="2">
    <source>
        <dbReference type="UniProtKB" id="P00157"/>
    </source>
</evidence>
<evidence type="ECO:0000255" key="3">
    <source>
        <dbReference type="PROSITE-ProRule" id="PRU00967"/>
    </source>
</evidence>
<evidence type="ECO:0000255" key="4">
    <source>
        <dbReference type="PROSITE-ProRule" id="PRU00968"/>
    </source>
</evidence>
<geneLocation type="mitochondrion"/>
<protein>
    <recommendedName>
        <fullName>Cytochrome b</fullName>
    </recommendedName>
    <alternativeName>
        <fullName>Complex III subunit 3</fullName>
    </alternativeName>
    <alternativeName>
        <fullName>Complex III subunit III</fullName>
    </alternativeName>
    <alternativeName>
        <fullName>Cytochrome b-c1 complex subunit 3</fullName>
    </alternativeName>
    <alternativeName>
        <fullName>Ubiquinol-cytochrome-c reductase complex cytochrome b subunit</fullName>
    </alternativeName>
</protein>
<gene>
    <name type="primary">MT-CYB</name>
    <name type="synonym">COB</name>
    <name type="synonym">CYTB</name>
    <name type="synonym">MTCYB</name>
</gene>
<dbReference type="EMBL" id="U34667">
    <property type="protein sequence ID" value="AAA99745.1"/>
    <property type="molecule type" value="Genomic_DNA"/>
</dbReference>
<dbReference type="SMR" id="Q34279"/>
<dbReference type="GO" id="GO:0005743">
    <property type="term" value="C:mitochondrial inner membrane"/>
    <property type="evidence" value="ECO:0007669"/>
    <property type="project" value="UniProtKB-SubCell"/>
</dbReference>
<dbReference type="GO" id="GO:0045275">
    <property type="term" value="C:respiratory chain complex III"/>
    <property type="evidence" value="ECO:0007669"/>
    <property type="project" value="InterPro"/>
</dbReference>
<dbReference type="GO" id="GO:0046872">
    <property type="term" value="F:metal ion binding"/>
    <property type="evidence" value="ECO:0007669"/>
    <property type="project" value="UniProtKB-KW"/>
</dbReference>
<dbReference type="GO" id="GO:0008121">
    <property type="term" value="F:ubiquinol-cytochrome-c reductase activity"/>
    <property type="evidence" value="ECO:0007669"/>
    <property type="project" value="InterPro"/>
</dbReference>
<dbReference type="GO" id="GO:0006122">
    <property type="term" value="P:mitochondrial electron transport, ubiquinol to cytochrome c"/>
    <property type="evidence" value="ECO:0007669"/>
    <property type="project" value="TreeGrafter"/>
</dbReference>
<dbReference type="CDD" id="cd00290">
    <property type="entry name" value="cytochrome_b_C"/>
    <property type="match status" value="1"/>
</dbReference>
<dbReference type="CDD" id="cd00284">
    <property type="entry name" value="Cytochrome_b_N"/>
    <property type="match status" value="1"/>
</dbReference>
<dbReference type="FunFam" id="1.20.810.10:FF:000002">
    <property type="entry name" value="Cytochrome b"/>
    <property type="match status" value="1"/>
</dbReference>
<dbReference type="Gene3D" id="1.20.810.10">
    <property type="entry name" value="Cytochrome Bc1 Complex, Chain C"/>
    <property type="match status" value="1"/>
</dbReference>
<dbReference type="InterPro" id="IPR005798">
    <property type="entry name" value="Cyt_b/b6_C"/>
</dbReference>
<dbReference type="InterPro" id="IPR036150">
    <property type="entry name" value="Cyt_b/b6_C_sf"/>
</dbReference>
<dbReference type="InterPro" id="IPR005797">
    <property type="entry name" value="Cyt_b/b6_N"/>
</dbReference>
<dbReference type="InterPro" id="IPR027387">
    <property type="entry name" value="Cytb/b6-like_sf"/>
</dbReference>
<dbReference type="InterPro" id="IPR030689">
    <property type="entry name" value="Cytochrome_b"/>
</dbReference>
<dbReference type="InterPro" id="IPR048260">
    <property type="entry name" value="Cytochrome_b_C_euk/bac"/>
</dbReference>
<dbReference type="InterPro" id="IPR048259">
    <property type="entry name" value="Cytochrome_b_N_euk/bac"/>
</dbReference>
<dbReference type="InterPro" id="IPR016174">
    <property type="entry name" value="Di-haem_cyt_TM"/>
</dbReference>
<dbReference type="PANTHER" id="PTHR19271">
    <property type="entry name" value="CYTOCHROME B"/>
    <property type="match status" value="1"/>
</dbReference>
<dbReference type="PANTHER" id="PTHR19271:SF16">
    <property type="entry name" value="CYTOCHROME B"/>
    <property type="match status" value="1"/>
</dbReference>
<dbReference type="Pfam" id="PF00032">
    <property type="entry name" value="Cytochrom_B_C"/>
    <property type="match status" value="1"/>
</dbReference>
<dbReference type="Pfam" id="PF00033">
    <property type="entry name" value="Cytochrome_B"/>
    <property type="match status" value="1"/>
</dbReference>
<dbReference type="PIRSF" id="PIRSF038885">
    <property type="entry name" value="COB"/>
    <property type="match status" value="1"/>
</dbReference>
<dbReference type="SUPFAM" id="SSF81648">
    <property type="entry name" value="a domain/subunit of cytochrome bc1 complex (Ubiquinol-cytochrome c reductase)"/>
    <property type="match status" value="1"/>
</dbReference>
<dbReference type="SUPFAM" id="SSF81342">
    <property type="entry name" value="Transmembrane di-heme cytochromes"/>
    <property type="match status" value="1"/>
</dbReference>
<dbReference type="PROSITE" id="PS51003">
    <property type="entry name" value="CYTB_CTER"/>
    <property type="match status" value="1"/>
</dbReference>
<dbReference type="PROSITE" id="PS51002">
    <property type="entry name" value="CYTB_NTER"/>
    <property type="match status" value="1"/>
</dbReference>
<accession>Q34279</accession>
<sequence length="382" mass="43095">MTNIRKTHPLMKIINDSFIDLPTPSNISAWWNFGSLLGVCLVIQILTGLFLAMHYTSDTLTAFSSVAHICRDVNYGWLIRNIHANGASMFFMCLFLHVGRGIYYGSYLYKETWNIGVILLLTVMATAFVGYVLPWGQMSFWGATVITNLLSAIPYIGNTLVEWIWGGFSVDKATLTRFFAFHFILPFIILAMVVVHLLFLHETGSNNPTGLDPNSDKIPFHPYYTIKDILGLFLTIITLLSLAMFSPDLLGDPDNFTPANPLNTPPHIKPEWYFLFAYAILRSIPNKLGGVLALLASILILLIMPLLHTSTQRSMMFRPISQTLFWMLTANLIILTWIGGQPVEQPYITIGQWASISYFTIIIILMPLAGMLENYMLKPKFP</sequence>
<feature type="chain" id="PRO_0000060884" description="Cytochrome b">
    <location>
        <begin position="1"/>
        <end position="382"/>
    </location>
</feature>
<feature type="transmembrane region" description="Helical" evidence="2">
    <location>
        <begin position="33"/>
        <end position="53"/>
    </location>
</feature>
<feature type="transmembrane region" description="Helical" evidence="2">
    <location>
        <begin position="77"/>
        <end position="98"/>
    </location>
</feature>
<feature type="transmembrane region" description="Helical" evidence="2">
    <location>
        <begin position="113"/>
        <end position="133"/>
    </location>
</feature>
<feature type="transmembrane region" description="Helical" evidence="2">
    <location>
        <begin position="178"/>
        <end position="198"/>
    </location>
</feature>
<feature type="transmembrane region" description="Helical" evidence="2">
    <location>
        <begin position="226"/>
        <end position="246"/>
    </location>
</feature>
<feature type="transmembrane region" description="Helical" evidence="2">
    <location>
        <begin position="288"/>
        <end position="308"/>
    </location>
</feature>
<feature type="transmembrane region" description="Helical" evidence="2">
    <location>
        <begin position="320"/>
        <end position="340"/>
    </location>
</feature>
<feature type="transmembrane region" description="Helical" evidence="2">
    <location>
        <begin position="347"/>
        <end position="367"/>
    </location>
</feature>
<feature type="binding site" description="axial binding residue" evidence="2">
    <location>
        <position position="83"/>
    </location>
    <ligand>
        <name>heme b</name>
        <dbReference type="ChEBI" id="CHEBI:60344"/>
        <label>b562</label>
    </ligand>
    <ligandPart>
        <name>Fe</name>
        <dbReference type="ChEBI" id="CHEBI:18248"/>
    </ligandPart>
</feature>
<feature type="binding site" description="axial binding residue" evidence="2">
    <location>
        <position position="97"/>
    </location>
    <ligand>
        <name>heme b</name>
        <dbReference type="ChEBI" id="CHEBI:60344"/>
        <label>b566</label>
    </ligand>
    <ligandPart>
        <name>Fe</name>
        <dbReference type="ChEBI" id="CHEBI:18248"/>
    </ligandPart>
</feature>
<feature type="binding site" description="axial binding residue" evidence="2">
    <location>
        <position position="182"/>
    </location>
    <ligand>
        <name>heme b</name>
        <dbReference type="ChEBI" id="CHEBI:60344"/>
        <label>b562</label>
    </ligand>
    <ligandPart>
        <name>Fe</name>
        <dbReference type="ChEBI" id="CHEBI:18248"/>
    </ligandPart>
</feature>
<feature type="binding site" description="axial binding residue" evidence="2">
    <location>
        <position position="196"/>
    </location>
    <ligand>
        <name>heme b</name>
        <dbReference type="ChEBI" id="CHEBI:60344"/>
        <label>b566</label>
    </ligand>
    <ligandPart>
        <name>Fe</name>
        <dbReference type="ChEBI" id="CHEBI:18248"/>
    </ligandPart>
</feature>
<feature type="binding site" evidence="2">
    <location>
        <position position="201"/>
    </location>
    <ligand>
        <name>a ubiquinone</name>
        <dbReference type="ChEBI" id="CHEBI:16389"/>
    </ligand>
</feature>
<proteinExistence type="inferred from homology"/>
<reference key="1">
    <citation type="journal article" date="1996" name="J. Mammal. Evol.">
        <title>Relationships among didelphid marsupials based on sequence variation in the mitochondrial cytochrome b gene.</title>
        <authorList>
            <person name="Patton J.L."/>
            <person name="dos Reis Maria S.F."/>
            <person name="da Silva N.F."/>
        </authorList>
    </citation>
    <scope>NUCLEOTIDE SEQUENCE [GENOMIC DNA]</scope>
</reference>
<organism>
    <name type="scientific">Didelphis albiventris</name>
    <name type="common">White-eared opossum</name>
    <dbReference type="NCBI Taxonomy" id="42716"/>
    <lineage>
        <taxon>Eukaryota</taxon>
        <taxon>Metazoa</taxon>
        <taxon>Chordata</taxon>
        <taxon>Craniata</taxon>
        <taxon>Vertebrata</taxon>
        <taxon>Euteleostomi</taxon>
        <taxon>Mammalia</taxon>
        <taxon>Metatheria</taxon>
        <taxon>Didelphimorphia</taxon>
        <taxon>Didelphidae</taxon>
        <taxon>Didelphis</taxon>
    </lineage>
</organism>